<comment type="function">
    <text evidence="2">May be involved in the proteolytic processing of a quorum sensing system signal molecule precursor required for the regulation of the virulence genes for gelatinase (gelE) and a serine protease (sprE).</text>
</comment>
<comment type="subcellular location">
    <subcellularLocation>
        <location evidence="3">Cell membrane</location>
        <topology evidence="3">Multi-pass membrane protein</topology>
    </subcellularLocation>
</comment>
<comment type="similarity">
    <text evidence="3">Belongs to the AgrB family.</text>
</comment>
<accession>F2MNH8</accession>
<accession>Q833V5</accession>
<accession>Q9RQG4</accession>
<sequence length="242" mass="27629">MLIDWILKNIMDMDQEDQSGKTQWTKYYLTVYFSGLFNFLMILILSVLFGTLSETFIVYVVLIFLRPVAGGWHAKTKWLCRLESIVIYVAIPFVLKNSSVSLPFIYKILLICLLVVLFYWYAPQGTAIEPVQPSDLNVLKKQSLIRVCLLILCSLFVKEKIASVILYGLVIQGLMILPVTKNLIEGSVFMKFGKKIIKNVIEKRVAKVSDGVGTKPRLNQNSPNIFGQWMGQTEKPKKNIEK</sequence>
<gene>
    <name type="primary">fsrB</name>
    <name type="ordered locus">OG1RF_11528</name>
</gene>
<evidence type="ECO:0000255" key="1"/>
<evidence type="ECO:0000269" key="2">
    <source>
    </source>
</evidence>
<evidence type="ECO:0000305" key="3"/>
<organism>
    <name type="scientific">Enterococcus faecalis (strain ATCC 47077 / OG1RF)</name>
    <dbReference type="NCBI Taxonomy" id="474186"/>
    <lineage>
        <taxon>Bacteria</taxon>
        <taxon>Bacillati</taxon>
        <taxon>Bacillota</taxon>
        <taxon>Bacilli</taxon>
        <taxon>Lactobacillales</taxon>
        <taxon>Enterococcaceae</taxon>
        <taxon>Enterococcus</taxon>
    </lineage>
</organism>
<keyword id="KW-1003">Cell membrane</keyword>
<keyword id="KW-0378">Hydrolase</keyword>
<keyword id="KW-0472">Membrane</keyword>
<keyword id="KW-0645">Protease</keyword>
<keyword id="KW-0673">Quorum sensing</keyword>
<keyword id="KW-0812">Transmembrane</keyword>
<keyword id="KW-1133">Transmembrane helix</keyword>
<keyword id="KW-0843">Virulence</keyword>
<feature type="chain" id="PRO_0000412114" description="Protein FsrB">
    <location>
        <begin position="1"/>
        <end position="242"/>
    </location>
</feature>
<feature type="transmembrane region" description="Helical" evidence="1">
    <location>
        <begin position="29"/>
        <end position="49"/>
    </location>
</feature>
<feature type="transmembrane region" description="Helical" evidence="1">
    <location>
        <begin position="52"/>
        <end position="72"/>
    </location>
</feature>
<feature type="transmembrane region" description="Helical" evidence="1">
    <location>
        <begin position="78"/>
        <end position="95"/>
    </location>
</feature>
<feature type="transmembrane region" description="Helical" evidence="1">
    <location>
        <begin position="100"/>
        <end position="120"/>
    </location>
</feature>
<feature type="transmembrane region" description="Helical" evidence="1">
    <location>
        <begin position="160"/>
        <end position="180"/>
    </location>
</feature>
<protein>
    <recommendedName>
        <fullName>Protein FsrB</fullName>
    </recommendedName>
    <alternativeName>
        <fullName>AgrBfs</fullName>
    </alternativeName>
</protein>
<dbReference type="EMBL" id="AF108141">
    <property type="protein sequence ID" value="AAF14219.1"/>
    <property type="molecule type" value="Genomic_DNA"/>
</dbReference>
<dbReference type="EMBL" id="CP002621">
    <property type="protein sequence ID" value="AEA94215.1"/>
    <property type="molecule type" value="Genomic_DNA"/>
</dbReference>
<dbReference type="RefSeq" id="WP_002377181.1">
    <property type="nucleotide sequence ID" value="NZ_JAWXYD010000001.1"/>
</dbReference>
<dbReference type="MEROPS" id="C75.002"/>
<dbReference type="KEGG" id="efi:OG1RF_11528"/>
<dbReference type="HOGENOM" id="CLU_1145793_0_0_9"/>
<dbReference type="GO" id="GO:0005886">
    <property type="term" value="C:plasma membrane"/>
    <property type="evidence" value="ECO:0007669"/>
    <property type="project" value="UniProtKB-SubCell"/>
</dbReference>
<dbReference type="GO" id="GO:0008233">
    <property type="term" value="F:peptidase activity"/>
    <property type="evidence" value="ECO:0007669"/>
    <property type="project" value="UniProtKB-UniRule"/>
</dbReference>
<dbReference type="GO" id="GO:0006508">
    <property type="term" value="P:proteolysis"/>
    <property type="evidence" value="ECO:0007669"/>
    <property type="project" value="UniProtKB-KW"/>
</dbReference>
<dbReference type="GO" id="GO:0009372">
    <property type="term" value="P:quorum sensing"/>
    <property type="evidence" value="ECO:0007669"/>
    <property type="project" value="UniProtKB-UniRule"/>
</dbReference>
<dbReference type="HAMAP" id="MF_00784">
    <property type="entry name" value="AgrB"/>
    <property type="match status" value="1"/>
</dbReference>
<dbReference type="InterPro" id="IPR006741">
    <property type="entry name" value="AgrB"/>
</dbReference>
<dbReference type="Pfam" id="PF04647">
    <property type="entry name" value="AgrB"/>
    <property type="match status" value="1"/>
</dbReference>
<dbReference type="SMART" id="SM00793">
    <property type="entry name" value="AgrB"/>
    <property type="match status" value="1"/>
</dbReference>
<name>FSRB_ENTFO</name>
<proteinExistence type="inferred from homology"/>
<reference key="1">
    <citation type="journal article" date="2000" name="Infect. Immun.">
        <title>Effects of Enterococcus faecalis fsr genes on production of gelatinase and a serine protease and virulence.</title>
        <authorList>
            <person name="Qin X."/>
            <person name="Singh K.V."/>
            <person name="Weinstock G.M."/>
            <person name="Murray B.E."/>
        </authorList>
    </citation>
    <scope>NUCLEOTIDE SEQUENCE [GENOMIC DNA]</scope>
    <scope>FUNCTION</scope>
    <source>
        <strain>ATCC 47077 / OG1RF</strain>
    </source>
</reference>
<reference key="2">
    <citation type="journal article" date="2008" name="Genome Biol.">
        <title>Large scale variation in Enterococcus faecalis illustrated by the genome analysis of strain OG1RF.</title>
        <authorList>
            <person name="Bourgogne A."/>
            <person name="Garsin D.A."/>
            <person name="Qin X."/>
            <person name="Singh K.V."/>
            <person name="Sillanpaa J."/>
            <person name="Yerrapragada S."/>
            <person name="Ding Y."/>
            <person name="Dugan-Rocha S."/>
            <person name="Buhay C."/>
            <person name="Shen H."/>
            <person name="Chen G."/>
            <person name="Williams G."/>
            <person name="Muzny D."/>
            <person name="Maadani A."/>
            <person name="Fox K.A."/>
            <person name="Gioia J."/>
            <person name="Chen L."/>
            <person name="Shang Y."/>
            <person name="Arias C.A."/>
            <person name="Nallapareddy S.R."/>
            <person name="Zhao M."/>
            <person name="Prakash V.P."/>
            <person name="Chowdhury S."/>
            <person name="Jiang H."/>
            <person name="Gibbs R.A."/>
            <person name="Murray B.E."/>
            <person name="Highlander S.K."/>
            <person name="Weinstock G.M."/>
        </authorList>
    </citation>
    <scope>NUCLEOTIDE SEQUENCE [LARGE SCALE GENOMIC DNA]</scope>
    <source>
        <strain>ATCC 47077 / OG1RF</strain>
    </source>
</reference>